<name>RBL_GUITH</name>
<organism>
    <name type="scientific">Guillardia theta</name>
    <name type="common">Cryptophyte</name>
    <name type="synonym">Cryptomonas phi</name>
    <dbReference type="NCBI Taxonomy" id="55529"/>
    <lineage>
        <taxon>Eukaryota</taxon>
        <taxon>Cryptophyceae</taxon>
        <taxon>Pyrenomonadales</taxon>
        <taxon>Geminigeraceae</taxon>
        <taxon>Guillardia</taxon>
    </lineage>
</organism>
<keyword id="KW-0113">Calvin cycle</keyword>
<keyword id="KW-0120">Carbon dioxide fixation</keyword>
<keyword id="KW-0150">Chloroplast</keyword>
<keyword id="KW-0456">Lyase</keyword>
<keyword id="KW-0460">Magnesium</keyword>
<keyword id="KW-0479">Metal-binding</keyword>
<keyword id="KW-0503">Monooxygenase</keyword>
<keyword id="KW-0560">Oxidoreductase</keyword>
<keyword id="KW-0601">Photorespiration</keyword>
<keyword id="KW-0602">Photosynthesis</keyword>
<keyword id="KW-0934">Plastid</keyword>
<feature type="chain" id="PRO_0000062485" description="Ribulose bisphosphate carboxylase large chain">
    <location>
        <begin position="1"/>
        <end position="488"/>
    </location>
</feature>
<feature type="active site" description="Proton acceptor" evidence="1">
    <location>
        <position position="179"/>
    </location>
</feature>
<feature type="active site" description="Proton acceptor" evidence="1">
    <location>
        <position position="297"/>
    </location>
</feature>
<feature type="binding site" description="in homodimeric partner" evidence="1">
    <location>
        <position position="127"/>
    </location>
    <ligand>
        <name>substrate</name>
    </ligand>
</feature>
<feature type="binding site" evidence="1">
    <location>
        <position position="177"/>
    </location>
    <ligand>
        <name>substrate</name>
    </ligand>
</feature>
<feature type="binding site" evidence="1">
    <location>
        <position position="181"/>
    </location>
    <ligand>
        <name>substrate</name>
    </ligand>
</feature>
<feature type="binding site" description="via carbamate group" evidence="1">
    <location>
        <position position="205"/>
    </location>
    <ligand>
        <name>Mg(2+)</name>
        <dbReference type="ChEBI" id="CHEBI:18420"/>
    </ligand>
</feature>
<feature type="binding site" evidence="1">
    <location>
        <position position="207"/>
    </location>
    <ligand>
        <name>Mg(2+)</name>
        <dbReference type="ChEBI" id="CHEBI:18420"/>
    </ligand>
</feature>
<feature type="binding site" evidence="1">
    <location>
        <position position="208"/>
    </location>
    <ligand>
        <name>Mg(2+)</name>
        <dbReference type="ChEBI" id="CHEBI:18420"/>
    </ligand>
</feature>
<feature type="binding site" evidence="1">
    <location>
        <position position="298"/>
    </location>
    <ligand>
        <name>substrate</name>
    </ligand>
</feature>
<feature type="binding site" evidence="1">
    <location>
        <position position="330"/>
    </location>
    <ligand>
        <name>substrate</name>
    </ligand>
</feature>
<feature type="binding site" evidence="1">
    <location>
        <position position="382"/>
    </location>
    <ligand>
        <name>substrate</name>
    </ligand>
</feature>
<feature type="site" description="Transition state stabilizer" evidence="1">
    <location>
        <position position="337"/>
    </location>
</feature>
<feature type="modified residue" description="N6-carboxylysine" evidence="1">
    <location>
        <position position="205"/>
    </location>
</feature>
<evidence type="ECO:0000255" key="1">
    <source>
        <dbReference type="HAMAP-Rule" id="MF_01338"/>
    </source>
</evidence>
<proteinExistence type="inferred from homology"/>
<comment type="function">
    <text evidence="1">RuBisCO catalyzes two reactions: the carboxylation of D-ribulose 1,5-bisphosphate, the primary event in carbon dioxide fixation, as well as the oxidative fragmentation of the pentose substrate in the photorespiration process. Both reactions occur simultaneously and in competition at the same active site.</text>
</comment>
<comment type="catalytic activity">
    <reaction evidence="1">
        <text>2 (2R)-3-phosphoglycerate + 2 H(+) = D-ribulose 1,5-bisphosphate + CO2 + H2O</text>
        <dbReference type="Rhea" id="RHEA:23124"/>
        <dbReference type="ChEBI" id="CHEBI:15377"/>
        <dbReference type="ChEBI" id="CHEBI:15378"/>
        <dbReference type="ChEBI" id="CHEBI:16526"/>
        <dbReference type="ChEBI" id="CHEBI:57870"/>
        <dbReference type="ChEBI" id="CHEBI:58272"/>
        <dbReference type="EC" id="4.1.1.39"/>
    </reaction>
</comment>
<comment type="catalytic activity">
    <reaction evidence="1">
        <text>D-ribulose 1,5-bisphosphate + O2 = 2-phosphoglycolate + (2R)-3-phosphoglycerate + 2 H(+)</text>
        <dbReference type="Rhea" id="RHEA:36631"/>
        <dbReference type="ChEBI" id="CHEBI:15378"/>
        <dbReference type="ChEBI" id="CHEBI:15379"/>
        <dbReference type="ChEBI" id="CHEBI:57870"/>
        <dbReference type="ChEBI" id="CHEBI:58033"/>
        <dbReference type="ChEBI" id="CHEBI:58272"/>
    </reaction>
</comment>
<comment type="cofactor">
    <cofactor evidence="1">
        <name>Mg(2+)</name>
        <dbReference type="ChEBI" id="CHEBI:18420"/>
    </cofactor>
    <text evidence="1">Binds 1 Mg(2+) ion per subunit.</text>
</comment>
<comment type="subunit">
    <text evidence="1">Heterohexadecamer of 8 large chains and 8 small chains.</text>
</comment>
<comment type="subcellular location">
    <subcellularLocation>
        <location>Plastid</location>
        <location>Chloroplast</location>
    </subcellularLocation>
</comment>
<comment type="miscellaneous">
    <text evidence="1">The basic functional RuBisCO is composed of a large chain homodimer in a 'head-to-tail' conformation. In form I RuBisCO this homodimer is arranged in a barrel-like tetramer with the small subunits forming a tetrameric 'cap' on each end of the 'barrel'.</text>
</comment>
<comment type="similarity">
    <text evidence="1">Belongs to the RuBisCO large chain family. Type I subfamily.</text>
</comment>
<gene>
    <name evidence="1" type="primary">rbcL</name>
</gene>
<dbReference type="EC" id="4.1.1.39" evidence="1"/>
<dbReference type="EMBL" id="AF041468">
    <property type="protein sequence ID" value="AAC35639.1"/>
    <property type="molecule type" value="Genomic_DNA"/>
</dbReference>
<dbReference type="PIR" id="S05288">
    <property type="entry name" value="S05288"/>
</dbReference>
<dbReference type="PIR" id="S78236">
    <property type="entry name" value="S78236"/>
</dbReference>
<dbReference type="RefSeq" id="NP_050705.1">
    <property type="nucleotide sequence ID" value="NC_000926.1"/>
</dbReference>
<dbReference type="SMR" id="P14957"/>
<dbReference type="GeneID" id="857003"/>
<dbReference type="HOGENOM" id="CLU_031450_2_0_1"/>
<dbReference type="OMA" id="IHGHPDG"/>
<dbReference type="GO" id="GO:0009507">
    <property type="term" value="C:chloroplast"/>
    <property type="evidence" value="ECO:0007669"/>
    <property type="project" value="UniProtKB-SubCell"/>
</dbReference>
<dbReference type="GO" id="GO:0000287">
    <property type="term" value="F:magnesium ion binding"/>
    <property type="evidence" value="ECO:0007669"/>
    <property type="project" value="UniProtKB-UniRule"/>
</dbReference>
<dbReference type="GO" id="GO:0004497">
    <property type="term" value="F:monooxygenase activity"/>
    <property type="evidence" value="ECO:0007669"/>
    <property type="project" value="UniProtKB-KW"/>
</dbReference>
<dbReference type="GO" id="GO:0016984">
    <property type="term" value="F:ribulose-bisphosphate carboxylase activity"/>
    <property type="evidence" value="ECO:0007669"/>
    <property type="project" value="UniProtKB-UniRule"/>
</dbReference>
<dbReference type="GO" id="GO:0019253">
    <property type="term" value="P:reductive pentose-phosphate cycle"/>
    <property type="evidence" value="ECO:0007669"/>
    <property type="project" value="UniProtKB-UniRule"/>
</dbReference>
<dbReference type="CDD" id="cd08212">
    <property type="entry name" value="RuBisCO_large_I"/>
    <property type="match status" value="1"/>
</dbReference>
<dbReference type="Gene3D" id="3.20.20.110">
    <property type="entry name" value="Ribulose bisphosphate carboxylase, large subunit, C-terminal domain"/>
    <property type="match status" value="1"/>
</dbReference>
<dbReference type="Gene3D" id="3.30.70.150">
    <property type="entry name" value="RuBisCO large subunit, N-terminal domain"/>
    <property type="match status" value="1"/>
</dbReference>
<dbReference type="HAMAP" id="MF_01338">
    <property type="entry name" value="RuBisCO_L_type1"/>
    <property type="match status" value="1"/>
</dbReference>
<dbReference type="InterPro" id="IPR033966">
    <property type="entry name" value="RuBisCO"/>
</dbReference>
<dbReference type="InterPro" id="IPR020878">
    <property type="entry name" value="RuBisCo_large_chain_AS"/>
</dbReference>
<dbReference type="InterPro" id="IPR000685">
    <property type="entry name" value="RuBisCO_lsu_C"/>
</dbReference>
<dbReference type="InterPro" id="IPR036376">
    <property type="entry name" value="RuBisCO_lsu_C_sf"/>
</dbReference>
<dbReference type="InterPro" id="IPR017443">
    <property type="entry name" value="RuBisCO_lsu_fd_N"/>
</dbReference>
<dbReference type="InterPro" id="IPR036422">
    <property type="entry name" value="RuBisCO_lsu_N_sf"/>
</dbReference>
<dbReference type="InterPro" id="IPR020888">
    <property type="entry name" value="RuBisCO_lsuI"/>
</dbReference>
<dbReference type="NCBIfam" id="NF003252">
    <property type="entry name" value="PRK04208.1"/>
    <property type="match status" value="1"/>
</dbReference>
<dbReference type="PANTHER" id="PTHR42704">
    <property type="entry name" value="RIBULOSE BISPHOSPHATE CARBOXYLASE"/>
    <property type="match status" value="1"/>
</dbReference>
<dbReference type="PANTHER" id="PTHR42704:SF17">
    <property type="entry name" value="RIBULOSE BISPHOSPHATE CARBOXYLASE LARGE CHAIN"/>
    <property type="match status" value="1"/>
</dbReference>
<dbReference type="Pfam" id="PF00016">
    <property type="entry name" value="RuBisCO_large"/>
    <property type="match status" value="1"/>
</dbReference>
<dbReference type="Pfam" id="PF02788">
    <property type="entry name" value="RuBisCO_large_N"/>
    <property type="match status" value="1"/>
</dbReference>
<dbReference type="SFLD" id="SFLDG01052">
    <property type="entry name" value="RuBisCO"/>
    <property type="match status" value="1"/>
</dbReference>
<dbReference type="SFLD" id="SFLDS00014">
    <property type="entry name" value="RuBisCO"/>
    <property type="match status" value="1"/>
</dbReference>
<dbReference type="SFLD" id="SFLDG00301">
    <property type="entry name" value="RuBisCO-like_proteins"/>
    <property type="match status" value="1"/>
</dbReference>
<dbReference type="SUPFAM" id="SSF51649">
    <property type="entry name" value="RuBisCo, C-terminal domain"/>
    <property type="match status" value="1"/>
</dbReference>
<dbReference type="SUPFAM" id="SSF54966">
    <property type="entry name" value="RuBisCO, large subunit, small (N-terminal) domain"/>
    <property type="match status" value="1"/>
</dbReference>
<dbReference type="PROSITE" id="PS00157">
    <property type="entry name" value="RUBISCO_LARGE"/>
    <property type="match status" value="1"/>
</dbReference>
<accession>P14957</accession>
<geneLocation type="chloroplast"/>
<reference key="1">
    <citation type="journal article" date="1990" name="J. Phycol.">
        <title>Nucleotide sequence of the gene for the large subunit of ribulose-1,5-bisphosphate carboxylase/oxygenase from Cryptomonas phi: evidence supporting the polyphyletic origin of plastids.</title>
        <authorList>
            <person name="Douglas S.E."/>
            <person name="Durnford D.G."/>
            <person name="Morden C.W."/>
        </authorList>
    </citation>
    <scope>NUCLEOTIDE SEQUENCE [GENOMIC DNA]</scope>
</reference>
<reference key="2">
    <citation type="journal article" date="1989" name="Plant Mol. Biol.">
        <title>The small subunit of ribulose-1,5-bisphosphate carboxylase is plastid-encoded in the chlorophyll c-containing alga Cryptomonas phi.</title>
        <authorList>
            <person name="Douglas S.E."/>
            <person name="Durnford D.G."/>
        </authorList>
    </citation>
    <scope>NUCLEOTIDE SEQUENCE [GENOMIC DNA] OF 470-488</scope>
</reference>
<sequence length="488" mass="53865">MSQSVESRTRIKNERYESGVIPYAKMGYWDADYVIKDTDVLAMFRMTPQKGVDPVECAAAIAGESSTATWTVVWTDLLTACDLYRAKAYRVDPVPGATDQYFAYIAYELDLFEEGSLANLTASIIGNVFGFKAVNALRLEDMRLPIAYLKTFQGPATGVIVERERLDKYGRPLLGATVKPKLGLSGKNYGRVVYEGLKGGLDFLKDDENINSQPFMRWKERFLFGIEGVNRAAAAAGEVKGHYFNVTAGTMEDMYERAEFCKEIGSVICMIDLVIGYTAIQSMAIWARKNSMILHLHRAGNSTYSRQKTHGMNFRVICKWMRMAGVDHIHAGTVVGKLEGDPLMVKGFYNTLLETQTDVNLVQGLFFAQDWAALNKCMPVASGGIHCGQMHQLINYLGDDVVLQFGGGTIGHPDGIQAGATANRVALECMVVARNEGRDYVTEGPQILRNAAKSCGPLQTALDLWKDITFNYASTDTADFVETATANK</sequence>
<protein>
    <recommendedName>
        <fullName evidence="1">Ribulose bisphosphate carboxylase large chain</fullName>
        <shortName evidence="1">RuBisCO large subunit</shortName>
        <ecNumber evidence="1">4.1.1.39</ecNumber>
    </recommendedName>
</protein>